<proteinExistence type="inferred from homology"/>
<evidence type="ECO:0000255" key="1"/>
<evidence type="ECO:0000255" key="2">
    <source>
        <dbReference type="HAMAP-Rule" id="MF_01260"/>
    </source>
</evidence>
<dbReference type="EC" id="3.1.1.85" evidence="2"/>
<dbReference type="EMBL" id="CP001144">
    <property type="protein sequence ID" value="ACH77961.1"/>
    <property type="molecule type" value="Genomic_DNA"/>
</dbReference>
<dbReference type="RefSeq" id="WP_000998146.1">
    <property type="nucleotide sequence ID" value="NC_011205.1"/>
</dbReference>
<dbReference type="SMR" id="B5FJT1"/>
<dbReference type="ESTHER" id="salty-BIOH">
    <property type="family name" value="BioH"/>
</dbReference>
<dbReference type="KEGG" id="sed:SeD_A3879"/>
<dbReference type="HOGENOM" id="CLU_020336_12_2_6"/>
<dbReference type="UniPathway" id="UPA00078"/>
<dbReference type="Proteomes" id="UP000008322">
    <property type="component" value="Chromosome"/>
</dbReference>
<dbReference type="GO" id="GO:0005737">
    <property type="term" value="C:cytoplasm"/>
    <property type="evidence" value="ECO:0007669"/>
    <property type="project" value="UniProtKB-SubCell"/>
</dbReference>
<dbReference type="GO" id="GO:0090499">
    <property type="term" value="F:pimelyl-[acyl-carrier protein] methyl ester esterase activity"/>
    <property type="evidence" value="ECO:0007669"/>
    <property type="project" value="UniProtKB-EC"/>
</dbReference>
<dbReference type="GO" id="GO:0009102">
    <property type="term" value="P:biotin biosynthetic process"/>
    <property type="evidence" value="ECO:0007669"/>
    <property type="project" value="UniProtKB-UniRule"/>
</dbReference>
<dbReference type="FunFam" id="3.40.50.1820:FF:000045">
    <property type="entry name" value="Pimeloyl-[acyl-carrier protein] methyl ester esterase"/>
    <property type="match status" value="1"/>
</dbReference>
<dbReference type="Gene3D" id="3.40.50.1820">
    <property type="entry name" value="alpha/beta hydrolase"/>
    <property type="match status" value="1"/>
</dbReference>
<dbReference type="HAMAP" id="MF_01260">
    <property type="entry name" value="Carboxylester"/>
    <property type="match status" value="1"/>
</dbReference>
<dbReference type="InterPro" id="IPR000073">
    <property type="entry name" value="AB_hydrolase_1"/>
</dbReference>
<dbReference type="InterPro" id="IPR029058">
    <property type="entry name" value="AB_hydrolase_fold"/>
</dbReference>
<dbReference type="InterPro" id="IPR010076">
    <property type="entry name" value="BioH"/>
</dbReference>
<dbReference type="InterPro" id="IPR050228">
    <property type="entry name" value="Carboxylesterase_BioH"/>
</dbReference>
<dbReference type="NCBIfam" id="TIGR01738">
    <property type="entry name" value="bioH"/>
    <property type="match status" value="1"/>
</dbReference>
<dbReference type="NCBIfam" id="NF007674">
    <property type="entry name" value="PRK10349.1"/>
    <property type="match status" value="1"/>
</dbReference>
<dbReference type="PANTHER" id="PTHR43194">
    <property type="entry name" value="HYDROLASE ALPHA/BETA FOLD FAMILY"/>
    <property type="match status" value="1"/>
</dbReference>
<dbReference type="PANTHER" id="PTHR43194:SF5">
    <property type="entry name" value="PIMELOYL-[ACYL-CARRIER PROTEIN] METHYL ESTER ESTERASE"/>
    <property type="match status" value="1"/>
</dbReference>
<dbReference type="Pfam" id="PF00561">
    <property type="entry name" value="Abhydrolase_1"/>
    <property type="match status" value="1"/>
</dbReference>
<dbReference type="SUPFAM" id="SSF53474">
    <property type="entry name" value="alpha/beta-Hydrolases"/>
    <property type="match status" value="1"/>
</dbReference>
<accession>B5FJT1</accession>
<reference key="1">
    <citation type="journal article" date="2011" name="J. Bacteriol.">
        <title>Comparative genomics of 28 Salmonella enterica isolates: evidence for CRISPR-mediated adaptive sublineage evolution.</title>
        <authorList>
            <person name="Fricke W.F."/>
            <person name="Mammel M.K."/>
            <person name="McDermott P.F."/>
            <person name="Tartera C."/>
            <person name="White D.G."/>
            <person name="Leclerc J.E."/>
            <person name="Ravel J."/>
            <person name="Cebula T.A."/>
        </authorList>
    </citation>
    <scope>NUCLEOTIDE SEQUENCE [LARGE SCALE GENOMIC DNA]</scope>
    <source>
        <strain>CT_02021853</strain>
    </source>
</reference>
<name>BIOH_SALDC</name>
<keyword id="KW-0093">Biotin biosynthesis</keyword>
<keyword id="KW-0963">Cytoplasm</keyword>
<keyword id="KW-0378">Hydrolase</keyword>
<keyword id="KW-0719">Serine esterase</keyword>
<protein>
    <recommendedName>
        <fullName evidence="2">Pimeloyl-[acyl-carrier protein] methyl ester esterase</fullName>
        <ecNumber evidence="2">3.1.1.85</ecNumber>
    </recommendedName>
    <alternativeName>
        <fullName evidence="2">Biotin synthesis protein BioH</fullName>
    </alternativeName>
    <alternativeName>
        <fullName evidence="2">Carboxylesterase BioH</fullName>
    </alternativeName>
</protein>
<sequence length="256" mass="28269">MNDIWWQTYGEGNCHLVLLHGWGLNAEVWHCIREELGSHFTLHLVDLPGYGRSSGFGAMTLEEMTAQVAKNAPDQAIWLGWSLGGLVASQMALTHPERVQALVTVASSPCFSAREGWPGIKPEILGGFQQQLSDDFQRTVERFLALQTLGTETARQDARTLKSVVLAQPMPDVEVLNGGLEILKTVDLREALKNVNMPFLRLYGYLDGLVPRKIVPLLDTLWPHSTSQIMAKAAHAPFISHPAAFCQALMTLKSSL</sequence>
<feature type="chain" id="PRO_1000139998" description="Pimeloyl-[acyl-carrier protein] methyl ester esterase">
    <location>
        <begin position="1"/>
        <end position="256"/>
    </location>
</feature>
<feature type="domain" description="AB hydrolase-1" evidence="1">
    <location>
        <begin position="15"/>
        <end position="242"/>
    </location>
</feature>
<feature type="active site" description="Nucleophile" evidence="2">
    <location>
        <position position="82"/>
    </location>
</feature>
<feature type="active site" evidence="2">
    <location>
        <position position="207"/>
    </location>
</feature>
<feature type="active site" evidence="2">
    <location>
        <position position="235"/>
    </location>
</feature>
<feature type="binding site" evidence="2">
    <location>
        <position position="22"/>
    </location>
    <ligand>
        <name>substrate</name>
    </ligand>
</feature>
<feature type="binding site" evidence="2">
    <location>
        <begin position="82"/>
        <end position="83"/>
    </location>
    <ligand>
        <name>substrate</name>
    </ligand>
</feature>
<feature type="binding site" evidence="2">
    <location>
        <begin position="143"/>
        <end position="147"/>
    </location>
    <ligand>
        <name>substrate</name>
    </ligand>
</feature>
<feature type="binding site" evidence="2">
    <location>
        <position position="235"/>
    </location>
    <ligand>
        <name>substrate</name>
    </ligand>
</feature>
<comment type="function">
    <text evidence="2">The physiological role of BioH is to remove the methyl group introduced by BioC when the pimeloyl moiety is complete. It allows to synthesize pimeloyl-ACP via the fatty acid synthetic pathway through the hydrolysis of the ester bonds of pimeloyl-ACP esters.</text>
</comment>
<comment type="catalytic activity">
    <reaction evidence="2">
        <text>6-carboxyhexanoyl-[ACP] methyl ester + H2O = 6-carboxyhexanoyl-[ACP] + methanol + H(+)</text>
        <dbReference type="Rhea" id="RHEA:42700"/>
        <dbReference type="Rhea" id="RHEA-COMP:9955"/>
        <dbReference type="Rhea" id="RHEA-COMP:10186"/>
        <dbReference type="ChEBI" id="CHEBI:15377"/>
        <dbReference type="ChEBI" id="CHEBI:15378"/>
        <dbReference type="ChEBI" id="CHEBI:17790"/>
        <dbReference type="ChEBI" id="CHEBI:78846"/>
        <dbReference type="ChEBI" id="CHEBI:82735"/>
        <dbReference type="EC" id="3.1.1.85"/>
    </reaction>
</comment>
<comment type="pathway">
    <text evidence="2">Cofactor biosynthesis; biotin biosynthesis.</text>
</comment>
<comment type="subunit">
    <text evidence="2">Monomer.</text>
</comment>
<comment type="subcellular location">
    <subcellularLocation>
        <location evidence="2">Cytoplasm</location>
    </subcellularLocation>
</comment>
<comment type="similarity">
    <text evidence="2">Belongs to the AB hydrolase superfamily. Carboxylesterase BioH family.</text>
</comment>
<organism>
    <name type="scientific">Salmonella dublin (strain CT_02021853)</name>
    <dbReference type="NCBI Taxonomy" id="439851"/>
    <lineage>
        <taxon>Bacteria</taxon>
        <taxon>Pseudomonadati</taxon>
        <taxon>Pseudomonadota</taxon>
        <taxon>Gammaproteobacteria</taxon>
        <taxon>Enterobacterales</taxon>
        <taxon>Enterobacteriaceae</taxon>
        <taxon>Salmonella</taxon>
    </lineage>
</organism>
<gene>
    <name evidence="2" type="primary">bioH</name>
    <name type="ordered locus">SeD_A3879</name>
</gene>